<gene>
    <name type="primary">SERPINE1</name>
    <name type="synonym">PAI-1</name>
    <name type="synonym">PAI1</name>
    <name type="synonym">PLANH1</name>
</gene>
<reference key="1">
    <citation type="journal article" date="1995" name="Gene">
        <title>Cloning of the mink plasminogen activator inhibitor type-1 messenger RNA: an mRNA with a short half life.</title>
        <authorList>
            <person name="Chuang T.H."/>
            <person name="Hamilton R.T."/>
            <person name="Nilsen-Hamilton M."/>
        </authorList>
    </citation>
    <scope>NUCLEOTIDE SEQUENCE [MRNA]</scope>
    <source>
        <tissue>Lung</tissue>
    </source>
</reference>
<feature type="signal peptide" evidence="4">
    <location>
        <begin position="1"/>
        <end position="21"/>
    </location>
</feature>
<feature type="chain" id="PRO_0000032501" description="Plasminogen activator inhibitor 1">
    <location>
        <begin position="22"/>
        <end position="400"/>
    </location>
</feature>
<feature type="site" description="Reactive bond" evidence="1">
    <location>
        <begin position="367"/>
        <end position="368"/>
    </location>
</feature>
<feature type="glycosylation site" description="N-linked (GlcNAc...) asparagine" evidence="4">
    <location>
        <position position="230"/>
    </location>
</feature>
<feature type="glycosylation site" description="N-linked (GlcNAc...) asparagine" evidence="4">
    <location>
        <position position="286"/>
    </location>
</feature>
<feature type="glycosylation site" description="N-linked (GlcNAc...) asparagine" evidence="4">
    <location>
        <position position="350"/>
    </location>
</feature>
<proteinExistence type="evidence at transcript level"/>
<protein>
    <recommendedName>
        <fullName>Plasminogen activator inhibitor 1</fullName>
        <shortName>PAI</shortName>
        <shortName>PAI-1</shortName>
    </recommendedName>
    <alternativeName>
        <fullName>Endothelial plasminogen activator inhibitor</fullName>
    </alternativeName>
    <alternativeName>
        <fullName>Serpin E1</fullName>
    </alternativeName>
</protein>
<organism>
    <name type="scientific">Neovison vison</name>
    <name type="common">American mink</name>
    <name type="synonym">Mustela vison</name>
    <dbReference type="NCBI Taxonomy" id="452646"/>
    <lineage>
        <taxon>Eukaryota</taxon>
        <taxon>Metazoa</taxon>
        <taxon>Chordata</taxon>
        <taxon>Craniata</taxon>
        <taxon>Vertebrata</taxon>
        <taxon>Euteleostomi</taxon>
        <taxon>Mammalia</taxon>
        <taxon>Eutheria</taxon>
        <taxon>Laurasiatheria</taxon>
        <taxon>Carnivora</taxon>
        <taxon>Caniformia</taxon>
        <taxon>Musteloidea</taxon>
        <taxon>Mustelidae</taxon>
        <taxon>Mustelinae</taxon>
        <taxon>Neogale</taxon>
    </lineage>
</organism>
<sequence length="400" mass="45153">MQMSTVCLALGLALVFGEASASYLHETRAAELATDFGVKVFKQVAQASKDRNMVFSPYGLASVLAMLQLTTAGETRQQIQEAMRFQIDEKGMAPALRQLYKELMGPWNKDEISTADAIFVQRDLKLVHGFMPYFFRLFQTTVKQVDFSEVERARFIINDWVKRHTKGMIGDLLGRGTVDQLTRLMLVNALYFNGQWKTPFPKSGTHHRLFHKSDGSTVSVPMMAQTNKFNYTEFSTPEGRYYDILELPYHGDTLSMFIAAPYEKDVPLSALTNILDAQLISQWKGNMTRRLRLLVLPKFSLESEVNLRGPLENLGMTDMFRPNQADFSSLSDQEALYVSQALQKVKIEVNESGTVASSSTAIIVSARMAPEEIIMDRPFLFVVRHNPTGTVLFMGQVMEP</sequence>
<name>PAI1_NEOVI</name>
<comment type="function">
    <text evidence="2 3">Serine protease inhibitor. Inhibits TMPRSS7. Is a primary inhibitor of tissue-type plasminogen activator (PLAT) and urokinase-type plasminogen activator (PLAU). As PLAT inhibitor, it is required for fibrinolysis down-regulation and is responsible for the controlled degradation of blood clots. As PLAU inhibitor, it is involved in the regulation of cell adhesion and spreading. Acts as a regulator of cell migration, independently of its role as protease inhibitor. It is required for stimulation of keratinocyte migration during cutaneous injury repair. It is involved in cellular and replicative senescence (By similarity). Plays a role in alveolar type 2 cells senescence in the lung (By similarity). Is involved in the regulation of cementogenic differentiation of periodontal ligament stem cells, and regulates odontoblast differentiation and dentin formation during odontogenesis (By similarity).</text>
</comment>
<comment type="subunit">
    <text evidence="2">Forms a heterodimer with TMPRSS7. Interacts with VTN. Binds LRP1B; binding is followed by internalization and degradation. Interacts with PPP1CB. In complex with PLAU/uPA, interacts with PLAUR/uPAR (By similarity). Interacts with SORL1 and LRP1, either alone or in complex with PLAU; these interactions are abolished in the presence of LRPAP1/RAP (By similarity). The ternary complex composed of PLAUR-PLAU-PAI1 also interacts with SORL1 (By similarity). Interacts with PLAT/tPA (By similarity). Also interacts with SORL1, when complexed to PLAT/tPA (By similarity).</text>
</comment>
<comment type="subcellular location">
    <subcellularLocation>
        <location evidence="2">Secreted</location>
    </subcellularLocation>
</comment>
<comment type="similarity">
    <text evidence="5">Belongs to the serpin family.</text>
</comment>
<accession>P50449</accession>
<keyword id="KW-0325">Glycoprotein</keyword>
<keyword id="KW-0646">Protease inhibitor</keyword>
<keyword id="KW-1185">Reference proteome</keyword>
<keyword id="KW-0964">Secreted</keyword>
<keyword id="KW-0722">Serine protease inhibitor</keyword>
<keyword id="KW-0732">Signal</keyword>
<dbReference type="EMBL" id="X58541">
    <property type="protein sequence ID" value="CAA41433.1"/>
    <property type="molecule type" value="mRNA"/>
</dbReference>
<dbReference type="PIR" id="JC4265">
    <property type="entry name" value="JC4265"/>
</dbReference>
<dbReference type="SMR" id="P50449"/>
<dbReference type="MEROPS" id="I04.020"/>
<dbReference type="GlyCosmos" id="P50449">
    <property type="glycosylation" value="3 sites, No reported glycans"/>
</dbReference>
<dbReference type="Proteomes" id="UP000694425">
    <property type="component" value="Unplaced"/>
</dbReference>
<dbReference type="GO" id="GO:0005615">
    <property type="term" value="C:extracellular space"/>
    <property type="evidence" value="ECO:0007669"/>
    <property type="project" value="InterPro"/>
</dbReference>
<dbReference type="GO" id="GO:0004867">
    <property type="term" value="F:serine-type endopeptidase inhibitor activity"/>
    <property type="evidence" value="ECO:0007669"/>
    <property type="project" value="UniProtKB-KW"/>
</dbReference>
<dbReference type="GO" id="GO:0010757">
    <property type="term" value="P:negative regulation of plasminogen activation"/>
    <property type="evidence" value="ECO:0007669"/>
    <property type="project" value="TreeGrafter"/>
</dbReference>
<dbReference type="GO" id="GO:0061044">
    <property type="term" value="P:negative regulation of vascular wound healing"/>
    <property type="evidence" value="ECO:0007669"/>
    <property type="project" value="TreeGrafter"/>
</dbReference>
<dbReference type="GO" id="GO:0090399">
    <property type="term" value="P:replicative senescence"/>
    <property type="evidence" value="ECO:0000250"/>
    <property type="project" value="UniProtKB"/>
</dbReference>
<dbReference type="FunFam" id="2.30.39.10:FF:000006">
    <property type="entry name" value="Plasminogen activator inhibitor 1"/>
    <property type="match status" value="1"/>
</dbReference>
<dbReference type="FunFam" id="3.30.497.10:FF:000006">
    <property type="entry name" value="Plasminogen activator inhibitor 1"/>
    <property type="match status" value="1"/>
</dbReference>
<dbReference type="Gene3D" id="2.30.39.10">
    <property type="entry name" value="Alpha-1-antitrypsin, domain 1"/>
    <property type="match status" value="1"/>
</dbReference>
<dbReference type="Gene3D" id="3.30.497.10">
    <property type="entry name" value="Antithrombin, subunit I, domain 2"/>
    <property type="match status" value="1"/>
</dbReference>
<dbReference type="InterPro" id="IPR023795">
    <property type="entry name" value="Serpin_CS"/>
</dbReference>
<dbReference type="InterPro" id="IPR023796">
    <property type="entry name" value="Serpin_dom"/>
</dbReference>
<dbReference type="InterPro" id="IPR000215">
    <property type="entry name" value="Serpin_fam"/>
</dbReference>
<dbReference type="InterPro" id="IPR036186">
    <property type="entry name" value="Serpin_sf"/>
</dbReference>
<dbReference type="InterPro" id="IPR042178">
    <property type="entry name" value="Serpin_sf_1"/>
</dbReference>
<dbReference type="InterPro" id="IPR042185">
    <property type="entry name" value="Serpin_sf_2"/>
</dbReference>
<dbReference type="PANTHER" id="PTHR11461:SF49">
    <property type="entry name" value="PLASMINOGEN ACTIVATOR INHIBITOR 1"/>
    <property type="match status" value="1"/>
</dbReference>
<dbReference type="PANTHER" id="PTHR11461">
    <property type="entry name" value="SERINE PROTEASE INHIBITOR, SERPIN"/>
    <property type="match status" value="1"/>
</dbReference>
<dbReference type="Pfam" id="PF00079">
    <property type="entry name" value="Serpin"/>
    <property type="match status" value="1"/>
</dbReference>
<dbReference type="SMART" id="SM00093">
    <property type="entry name" value="SERPIN"/>
    <property type="match status" value="1"/>
</dbReference>
<dbReference type="SUPFAM" id="SSF56574">
    <property type="entry name" value="Serpins"/>
    <property type="match status" value="1"/>
</dbReference>
<dbReference type="PROSITE" id="PS00284">
    <property type="entry name" value="SERPIN"/>
    <property type="match status" value="1"/>
</dbReference>
<evidence type="ECO:0000250" key="1"/>
<evidence type="ECO:0000250" key="2">
    <source>
        <dbReference type="UniProtKB" id="P05121"/>
    </source>
</evidence>
<evidence type="ECO:0000250" key="3">
    <source>
        <dbReference type="UniProtKB" id="P22777"/>
    </source>
</evidence>
<evidence type="ECO:0000255" key="4"/>
<evidence type="ECO:0000305" key="5"/>